<accession>Q0VPH7</accession>
<evidence type="ECO:0000255" key="1">
    <source>
        <dbReference type="HAMAP-Rule" id="MF_00300"/>
    </source>
</evidence>
<sequence>MAGNSFGERFKITTFGESHGPALGAIVDGCPPGLEISEEDLQVELDRRKPGTSRYTTQRREPDQVKILSGVFEGKTTGTTIGLLIENTDQKSKDYSNIAGTFRPGHADYTYTQKYGFRDYRGGGRSSARETAMRVAGGAIARKFLEQRLGIRIYGGCTQIGDVKAESLDWSTVNNNPFFFPDESKVPALEDLINALRKDGSSIGARVEVFADGVPPGWGEPVFDRIDADLAKAMMSINAVKGVEIGDGFAVVNQRGEQHRDEMTPQGFLSNHSGGVLGGISSGQTMRVAMALKPTSSILIAGKSIGLNGEAAEVVTKGRHDPCVGVRATPIAEAMLAIVLLDHYLRHRGQNADVVPPFPPIPG</sequence>
<protein>
    <recommendedName>
        <fullName evidence="1">Chorismate synthase</fullName>
        <shortName evidence="1">CS</shortName>
        <ecNumber evidence="1">4.2.3.5</ecNumber>
    </recommendedName>
    <alternativeName>
        <fullName evidence="1">5-enolpyruvylshikimate-3-phosphate phospholyase</fullName>
    </alternativeName>
</protein>
<gene>
    <name evidence="1" type="primary">aroC</name>
    <name type="ordered locus">ABO_1473</name>
</gene>
<dbReference type="EC" id="4.2.3.5" evidence="1"/>
<dbReference type="EMBL" id="AM286690">
    <property type="protein sequence ID" value="CAL16921.1"/>
    <property type="molecule type" value="Genomic_DNA"/>
</dbReference>
<dbReference type="RefSeq" id="WP_011588754.1">
    <property type="nucleotide sequence ID" value="NC_008260.1"/>
</dbReference>
<dbReference type="SMR" id="Q0VPH7"/>
<dbReference type="STRING" id="393595.ABO_1473"/>
<dbReference type="KEGG" id="abo:ABO_1473"/>
<dbReference type="eggNOG" id="COG0082">
    <property type="taxonomic scope" value="Bacteria"/>
</dbReference>
<dbReference type="HOGENOM" id="CLU_034547_0_2_6"/>
<dbReference type="OrthoDB" id="9771806at2"/>
<dbReference type="UniPathway" id="UPA00053">
    <property type="reaction ID" value="UER00090"/>
</dbReference>
<dbReference type="Proteomes" id="UP000008871">
    <property type="component" value="Chromosome"/>
</dbReference>
<dbReference type="GO" id="GO:0005829">
    <property type="term" value="C:cytosol"/>
    <property type="evidence" value="ECO:0007669"/>
    <property type="project" value="TreeGrafter"/>
</dbReference>
<dbReference type="GO" id="GO:0004107">
    <property type="term" value="F:chorismate synthase activity"/>
    <property type="evidence" value="ECO:0007669"/>
    <property type="project" value="UniProtKB-UniRule"/>
</dbReference>
<dbReference type="GO" id="GO:0010181">
    <property type="term" value="F:FMN binding"/>
    <property type="evidence" value="ECO:0007669"/>
    <property type="project" value="TreeGrafter"/>
</dbReference>
<dbReference type="GO" id="GO:0008652">
    <property type="term" value="P:amino acid biosynthetic process"/>
    <property type="evidence" value="ECO:0007669"/>
    <property type="project" value="UniProtKB-KW"/>
</dbReference>
<dbReference type="GO" id="GO:0009073">
    <property type="term" value="P:aromatic amino acid family biosynthetic process"/>
    <property type="evidence" value="ECO:0007669"/>
    <property type="project" value="UniProtKB-KW"/>
</dbReference>
<dbReference type="GO" id="GO:0009423">
    <property type="term" value="P:chorismate biosynthetic process"/>
    <property type="evidence" value="ECO:0007669"/>
    <property type="project" value="UniProtKB-UniRule"/>
</dbReference>
<dbReference type="CDD" id="cd07304">
    <property type="entry name" value="Chorismate_synthase"/>
    <property type="match status" value="1"/>
</dbReference>
<dbReference type="FunFam" id="3.60.150.10:FF:000001">
    <property type="entry name" value="Chorismate synthase"/>
    <property type="match status" value="1"/>
</dbReference>
<dbReference type="Gene3D" id="3.60.150.10">
    <property type="entry name" value="Chorismate synthase AroC"/>
    <property type="match status" value="1"/>
</dbReference>
<dbReference type="HAMAP" id="MF_00300">
    <property type="entry name" value="Chorismate_synth"/>
    <property type="match status" value="1"/>
</dbReference>
<dbReference type="InterPro" id="IPR000453">
    <property type="entry name" value="Chorismate_synth"/>
</dbReference>
<dbReference type="InterPro" id="IPR035904">
    <property type="entry name" value="Chorismate_synth_AroC_sf"/>
</dbReference>
<dbReference type="InterPro" id="IPR020541">
    <property type="entry name" value="Chorismate_synthase_CS"/>
</dbReference>
<dbReference type="NCBIfam" id="TIGR00033">
    <property type="entry name" value="aroC"/>
    <property type="match status" value="1"/>
</dbReference>
<dbReference type="NCBIfam" id="NF003793">
    <property type="entry name" value="PRK05382.1"/>
    <property type="match status" value="1"/>
</dbReference>
<dbReference type="PANTHER" id="PTHR21085">
    <property type="entry name" value="CHORISMATE SYNTHASE"/>
    <property type="match status" value="1"/>
</dbReference>
<dbReference type="PANTHER" id="PTHR21085:SF0">
    <property type="entry name" value="CHORISMATE SYNTHASE"/>
    <property type="match status" value="1"/>
</dbReference>
<dbReference type="Pfam" id="PF01264">
    <property type="entry name" value="Chorismate_synt"/>
    <property type="match status" value="1"/>
</dbReference>
<dbReference type="PIRSF" id="PIRSF001456">
    <property type="entry name" value="Chorismate_synth"/>
    <property type="match status" value="1"/>
</dbReference>
<dbReference type="SUPFAM" id="SSF103263">
    <property type="entry name" value="Chorismate synthase, AroC"/>
    <property type="match status" value="1"/>
</dbReference>
<dbReference type="PROSITE" id="PS00787">
    <property type="entry name" value="CHORISMATE_SYNTHASE_1"/>
    <property type="match status" value="1"/>
</dbReference>
<dbReference type="PROSITE" id="PS00788">
    <property type="entry name" value="CHORISMATE_SYNTHASE_2"/>
    <property type="match status" value="1"/>
</dbReference>
<dbReference type="PROSITE" id="PS00789">
    <property type="entry name" value="CHORISMATE_SYNTHASE_3"/>
    <property type="match status" value="1"/>
</dbReference>
<reference key="1">
    <citation type="journal article" date="2006" name="Nat. Biotechnol.">
        <title>Genome sequence of the ubiquitous hydrocarbon-degrading marine bacterium Alcanivorax borkumensis.</title>
        <authorList>
            <person name="Schneiker S."/>
            <person name="Martins dos Santos V.A.P."/>
            <person name="Bartels D."/>
            <person name="Bekel T."/>
            <person name="Brecht M."/>
            <person name="Buhrmester J."/>
            <person name="Chernikova T.N."/>
            <person name="Denaro R."/>
            <person name="Ferrer M."/>
            <person name="Gertler C."/>
            <person name="Goesmann A."/>
            <person name="Golyshina O.V."/>
            <person name="Kaminski F."/>
            <person name="Khachane A.N."/>
            <person name="Lang S."/>
            <person name="Linke B."/>
            <person name="McHardy A.C."/>
            <person name="Meyer F."/>
            <person name="Nechitaylo T."/>
            <person name="Puehler A."/>
            <person name="Regenhardt D."/>
            <person name="Rupp O."/>
            <person name="Sabirova J.S."/>
            <person name="Selbitschka W."/>
            <person name="Yakimov M.M."/>
            <person name="Timmis K.N."/>
            <person name="Vorhoelter F.-J."/>
            <person name="Weidner S."/>
            <person name="Kaiser O."/>
            <person name="Golyshin P.N."/>
        </authorList>
    </citation>
    <scope>NUCLEOTIDE SEQUENCE [LARGE SCALE GENOMIC DNA]</scope>
    <source>
        <strain>ATCC 700651 / DSM 11573 / NCIMB 13689 / SK2</strain>
    </source>
</reference>
<organism>
    <name type="scientific">Alcanivorax borkumensis (strain ATCC 700651 / DSM 11573 / NCIMB 13689 / SK2)</name>
    <dbReference type="NCBI Taxonomy" id="393595"/>
    <lineage>
        <taxon>Bacteria</taxon>
        <taxon>Pseudomonadati</taxon>
        <taxon>Pseudomonadota</taxon>
        <taxon>Gammaproteobacteria</taxon>
        <taxon>Oceanospirillales</taxon>
        <taxon>Alcanivoracaceae</taxon>
        <taxon>Alcanivorax</taxon>
    </lineage>
</organism>
<proteinExistence type="inferred from homology"/>
<comment type="function">
    <text evidence="1">Catalyzes the anti-1,4-elimination of the C-3 phosphate and the C-6 proR hydrogen from 5-enolpyruvylshikimate-3-phosphate (EPSP) to yield chorismate, which is the branch point compound that serves as the starting substrate for the three terminal pathways of aromatic amino acid biosynthesis. This reaction introduces a second double bond into the aromatic ring system.</text>
</comment>
<comment type="catalytic activity">
    <reaction evidence="1">
        <text>5-O-(1-carboxyvinyl)-3-phosphoshikimate = chorismate + phosphate</text>
        <dbReference type="Rhea" id="RHEA:21020"/>
        <dbReference type="ChEBI" id="CHEBI:29748"/>
        <dbReference type="ChEBI" id="CHEBI:43474"/>
        <dbReference type="ChEBI" id="CHEBI:57701"/>
        <dbReference type="EC" id="4.2.3.5"/>
    </reaction>
</comment>
<comment type="cofactor">
    <cofactor evidence="1">
        <name>FMNH2</name>
        <dbReference type="ChEBI" id="CHEBI:57618"/>
    </cofactor>
    <text evidence="1">Reduced FMN (FMNH(2)).</text>
</comment>
<comment type="pathway">
    <text evidence="1">Metabolic intermediate biosynthesis; chorismate biosynthesis; chorismate from D-erythrose 4-phosphate and phosphoenolpyruvate: step 7/7.</text>
</comment>
<comment type="subunit">
    <text evidence="1">Homotetramer.</text>
</comment>
<comment type="similarity">
    <text evidence="1">Belongs to the chorismate synthase family.</text>
</comment>
<feature type="chain" id="PRO_0000256269" description="Chorismate synthase">
    <location>
        <begin position="1"/>
        <end position="363"/>
    </location>
</feature>
<feature type="binding site" evidence="1">
    <location>
        <position position="48"/>
    </location>
    <ligand>
        <name>NADP(+)</name>
        <dbReference type="ChEBI" id="CHEBI:58349"/>
    </ligand>
</feature>
<feature type="binding site" evidence="1">
    <location>
        <position position="54"/>
    </location>
    <ligand>
        <name>NADP(+)</name>
        <dbReference type="ChEBI" id="CHEBI:58349"/>
    </ligand>
</feature>
<feature type="binding site" evidence="1">
    <location>
        <begin position="125"/>
        <end position="127"/>
    </location>
    <ligand>
        <name>FMN</name>
        <dbReference type="ChEBI" id="CHEBI:58210"/>
    </ligand>
</feature>
<feature type="binding site" evidence="1">
    <location>
        <begin position="238"/>
        <end position="239"/>
    </location>
    <ligand>
        <name>FMN</name>
        <dbReference type="ChEBI" id="CHEBI:58210"/>
    </ligand>
</feature>
<feature type="binding site" evidence="1">
    <location>
        <position position="278"/>
    </location>
    <ligand>
        <name>FMN</name>
        <dbReference type="ChEBI" id="CHEBI:58210"/>
    </ligand>
</feature>
<feature type="binding site" evidence="1">
    <location>
        <begin position="293"/>
        <end position="297"/>
    </location>
    <ligand>
        <name>FMN</name>
        <dbReference type="ChEBI" id="CHEBI:58210"/>
    </ligand>
</feature>
<feature type="binding site" evidence="1">
    <location>
        <position position="319"/>
    </location>
    <ligand>
        <name>FMN</name>
        <dbReference type="ChEBI" id="CHEBI:58210"/>
    </ligand>
</feature>
<name>AROC_ALCBS</name>
<keyword id="KW-0028">Amino-acid biosynthesis</keyword>
<keyword id="KW-0057">Aromatic amino acid biosynthesis</keyword>
<keyword id="KW-0274">FAD</keyword>
<keyword id="KW-0285">Flavoprotein</keyword>
<keyword id="KW-0288">FMN</keyword>
<keyword id="KW-0456">Lyase</keyword>
<keyword id="KW-0521">NADP</keyword>
<keyword id="KW-1185">Reference proteome</keyword>